<organism>
    <name type="scientific">Salmonella schwarzengrund (strain CVM19633)</name>
    <dbReference type="NCBI Taxonomy" id="439843"/>
    <lineage>
        <taxon>Bacteria</taxon>
        <taxon>Pseudomonadati</taxon>
        <taxon>Pseudomonadota</taxon>
        <taxon>Gammaproteobacteria</taxon>
        <taxon>Enterobacterales</taxon>
        <taxon>Enterobacteriaceae</taxon>
        <taxon>Salmonella</taxon>
    </lineage>
</organism>
<name>YBJQ_SALSV</name>
<accession>B4TRP6</accession>
<reference key="1">
    <citation type="journal article" date="2011" name="J. Bacteriol.">
        <title>Comparative genomics of 28 Salmonella enterica isolates: evidence for CRISPR-mediated adaptive sublineage evolution.</title>
        <authorList>
            <person name="Fricke W.F."/>
            <person name="Mammel M.K."/>
            <person name="McDermott P.F."/>
            <person name="Tartera C."/>
            <person name="White D.G."/>
            <person name="Leclerc J.E."/>
            <person name="Ravel J."/>
            <person name="Cebula T.A."/>
        </authorList>
    </citation>
    <scope>NUCLEOTIDE SEQUENCE [LARGE SCALE GENOMIC DNA]</scope>
    <source>
        <strain>CVM19633</strain>
    </source>
</reference>
<sequence>MQFSTTPTLEGQSIVEYCGVVTGEAILGANIFRDFFAGIRDIVGGRSGAYEKELRKAREIAFQELGEQAKALGADAVVGIDIDYETVGKDGSMLMVSVSGTAVKTRR</sequence>
<comment type="similarity">
    <text evidence="1">Belongs to the UPF0145 family.</text>
</comment>
<proteinExistence type="inferred from homology"/>
<gene>
    <name evidence="1" type="primary">ybjQ</name>
    <name type="ordered locus">SeSA_A1047</name>
</gene>
<dbReference type="EMBL" id="CP001127">
    <property type="protein sequence ID" value="ACF92162.1"/>
    <property type="molecule type" value="Genomic_DNA"/>
</dbReference>
<dbReference type="RefSeq" id="WP_001160725.1">
    <property type="nucleotide sequence ID" value="NC_011094.1"/>
</dbReference>
<dbReference type="SMR" id="B4TRP6"/>
<dbReference type="KEGG" id="sew:SeSA_A1047"/>
<dbReference type="HOGENOM" id="CLU_117144_3_0_6"/>
<dbReference type="Proteomes" id="UP000001865">
    <property type="component" value="Chromosome"/>
</dbReference>
<dbReference type="Gene3D" id="3.30.110.70">
    <property type="entry name" value="Hypothetical protein apc22750. Chain B"/>
    <property type="match status" value="1"/>
</dbReference>
<dbReference type="HAMAP" id="MF_00338">
    <property type="entry name" value="UPF0145"/>
    <property type="match status" value="1"/>
</dbReference>
<dbReference type="InterPro" id="IPR035439">
    <property type="entry name" value="UPF0145_dom_sf"/>
</dbReference>
<dbReference type="InterPro" id="IPR002765">
    <property type="entry name" value="UPF0145_YbjQ-like"/>
</dbReference>
<dbReference type="NCBIfam" id="NF002776">
    <property type="entry name" value="PRK02877.1"/>
    <property type="match status" value="1"/>
</dbReference>
<dbReference type="PANTHER" id="PTHR34068">
    <property type="entry name" value="UPF0145 PROTEIN YBJQ"/>
    <property type="match status" value="1"/>
</dbReference>
<dbReference type="PANTHER" id="PTHR34068:SF1">
    <property type="entry name" value="UPF0145 PROTEIN YBJQ"/>
    <property type="match status" value="1"/>
</dbReference>
<dbReference type="Pfam" id="PF01906">
    <property type="entry name" value="YbjQ_1"/>
    <property type="match status" value="1"/>
</dbReference>
<dbReference type="SUPFAM" id="SSF117782">
    <property type="entry name" value="YbjQ-like"/>
    <property type="match status" value="1"/>
</dbReference>
<protein>
    <recommendedName>
        <fullName evidence="1">UPF0145 protein YbjQ</fullName>
    </recommendedName>
</protein>
<evidence type="ECO:0000255" key="1">
    <source>
        <dbReference type="HAMAP-Rule" id="MF_00338"/>
    </source>
</evidence>
<feature type="chain" id="PRO_1000120016" description="UPF0145 protein YbjQ">
    <location>
        <begin position="1"/>
        <end position="107"/>
    </location>
</feature>